<comment type="function">
    <text evidence="1">One of the primary rRNA binding proteins, it binds specifically to the 5'-end of 16S ribosomal RNA.</text>
</comment>
<comment type="subunit">
    <text evidence="1">Part of the 30S ribosomal subunit.</text>
</comment>
<comment type="similarity">
    <text evidence="1">Belongs to the universal ribosomal protein uS17 family.</text>
</comment>
<feature type="chain" id="PRO_1000054971" description="Small ribosomal subunit protein uS17">
    <location>
        <begin position="1"/>
        <end position="86"/>
    </location>
</feature>
<protein>
    <recommendedName>
        <fullName evidence="1">Small ribosomal subunit protein uS17</fullName>
    </recommendedName>
    <alternativeName>
        <fullName evidence="2">30S ribosomal protein S17</fullName>
    </alternativeName>
</protein>
<name>RS17_LACLS</name>
<sequence>MERKQRKVYQGRVVSDKMDKTITVVVETKRNHPVYGKRINYSKKYKAHDENNSAKTGDIVRIMETRPLSKDKRFRLVEIVEEAVII</sequence>
<dbReference type="EMBL" id="CP000425">
    <property type="protein sequence ID" value="ABJ73839.1"/>
    <property type="molecule type" value="Genomic_DNA"/>
</dbReference>
<dbReference type="RefSeq" id="WP_011677157.1">
    <property type="nucleotide sequence ID" value="NC_008527.1"/>
</dbReference>
<dbReference type="SMR" id="Q02W33"/>
<dbReference type="KEGG" id="llc:LACR_2393"/>
<dbReference type="HOGENOM" id="CLU_073626_1_0_9"/>
<dbReference type="Proteomes" id="UP000000240">
    <property type="component" value="Chromosome"/>
</dbReference>
<dbReference type="GO" id="GO:0022627">
    <property type="term" value="C:cytosolic small ribosomal subunit"/>
    <property type="evidence" value="ECO:0007669"/>
    <property type="project" value="TreeGrafter"/>
</dbReference>
<dbReference type="GO" id="GO:0019843">
    <property type="term" value="F:rRNA binding"/>
    <property type="evidence" value="ECO:0007669"/>
    <property type="project" value="UniProtKB-UniRule"/>
</dbReference>
<dbReference type="GO" id="GO:0003735">
    <property type="term" value="F:structural constituent of ribosome"/>
    <property type="evidence" value="ECO:0007669"/>
    <property type="project" value="InterPro"/>
</dbReference>
<dbReference type="GO" id="GO:0006412">
    <property type="term" value="P:translation"/>
    <property type="evidence" value="ECO:0007669"/>
    <property type="project" value="UniProtKB-UniRule"/>
</dbReference>
<dbReference type="CDD" id="cd00364">
    <property type="entry name" value="Ribosomal_uS17"/>
    <property type="match status" value="1"/>
</dbReference>
<dbReference type="FunFam" id="2.40.50.140:FF:000026">
    <property type="entry name" value="30S ribosomal protein S17"/>
    <property type="match status" value="1"/>
</dbReference>
<dbReference type="Gene3D" id="2.40.50.140">
    <property type="entry name" value="Nucleic acid-binding proteins"/>
    <property type="match status" value="1"/>
</dbReference>
<dbReference type="HAMAP" id="MF_01345_B">
    <property type="entry name" value="Ribosomal_uS17_B"/>
    <property type="match status" value="1"/>
</dbReference>
<dbReference type="InterPro" id="IPR012340">
    <property type="entry name" value="NA-bd_OB-fold"/>
</dbReference>
<dbReference type="InterPro" id="IPR000266">
    <property type="entry name" value="Ribosomal_uS17"/>
</dbReference>
<dbReference type="InterPro" id="IPR019984">
    <property type="entry name" value="Ribosomal_uS17_bact/chlr"/>
</dbReference>
<dbReference type="InterPro" id="IPR019979">
    <property type="entry name" value="Ribosomal_uS17_CS"/>
</dbReference>
<dbReference type="NCBIfam" id="NF004123">
    <property type="entry name" value="PRK05610.1"/>
    <property type="match status" value="1"/>
</dbReference>
<dbReference type="NCBIfam" id="TIGR03635">
    <property type="entry name" value="uS17_bact"/>
    <property type="match status" value="1"/>
</dbReference>
<dbReference type="PANTHER" id="PTHR10744">
    <property type="entry name" value="40S RIBOSOMAL PROTEIN S11 FAMILY MEMBER"/>
    <property type="match status" value="1"/>
</dbReference>
<dbReference type="PANTHER" id="PTHR10744:SF1">
    <property type="entry name" value="SMALL RIBOSOMAL SUBUNIT PROTEIN US17M"/>
    <property type="match status" value="1"/>
</dbReference>
<dbReference type="Pfam" id="PF00366">
    <property type="entry name" value="Ribosomal_S17"/>
    <property type="match status" value="1"/>
</dbReference>
<dbReference type="PRINTS" id="PR00973">
    <property type="entry name" value="RIBOSOMALS17"/>
</dbReference>
<dbReference type="SUPFAM" id="SSF50249">
    <property type="entry name" value="Nucleic acid-binding proteins"/>
    <property type="match status" value="1"/>
</dbReference>
<dbReference type="PROSITE" id="PS00056">
    <property type="entry name" value="RIBOSOMAL_S17"/>
    <property type="match status" value="1"/>
</dbReference>
<keyword id="KW-0687">Ribonucleoprotein</keyword>
<keyword id="KW-0689">Ribosomal protein</keyword>
<keyword id="KW-0694">RNA-binding</keyword>
<keyword id="KW-0699">rRNA-binding</keyword>
<organism>
    <name type="scientific">Lactococcus lactis subsp. cremoris (strain SK11)</name>
    <dbReference type="NCBI Taxonomy" id="272622"/>
    <lineage>
        <taxon>Bacteria</taxon>
        <taxon>Bacillati</taxon>
        <taxon>Bacillota</taxon>
        <taxon>Bacilli</taxon>
        <taxon>Lactobacillales</taxon>
        <taxon>Streptococcaceae</taxon>
        <taxon>Lactococcus</taxon>
        <taxon>Lactococcus cremoris subsp. cremoris</taxon>
    </lineage>
</organism>
<evidence type="ECO:0000255" key="1">
    <source>
        <dbReference type="HAMAP-Rule" id="MF_01345"/>
    </source>
</evidence>
<evidence type="ECO:0000305" key="2"/>
<accession>Q02W33</accession>
<gene>
    <name evidence="1" type="primary">rpsQ</name>
    <name type="ordered locus">LACR_2393</name>
</gene>
<proteinExistence type="inferred from homology"/>
<reference key="1">
    <citation type="journal article" date="2006" name="Proc. Natl. Acad. Sci. U.S.A.">
        <title>Comparative genomics of the lactic acid bacteria.</title>
        <authorList>
            <person name="Makarova K.S."/>
            <person name="Slesarev A."/>
            <person name="Wolf Y.I."/>
            <person name="Sorokin A."/>
            <person name="Mirkin B."/>
            <person name="Koonin E.V."/>
            <person name="Pavlov A."/>
            <person name="Pavlova N."/>
            <person name="Karamychev V."/>
            <person name="Polouchine N."/>
            <person name="Shakhova V."/>
            <person name="Grigoriev I."/>
            <person name="Lou Y."/>
            <person name="Rohksar D."/>
            <person name="Lucas S."/>
            <person name="Huang K."/>
            <person name="Goodstein D.M."/>
            <person name="Hawkins T."/>
            <person name="Plengvidhya V."/>
            <person name="Welker D."/>
            <person name="Hughes J."/>
            <person name="Goh Y."/>
            <person name="Benson A."/>
            <person name="Baldwin K."/>
            <person name="Lee J.-H."/>
            <person name="Diaz-Muniz I."/>
            <person name="Dosti B."/>
            <person name="Smeianov V."/>
            <person name="Wechter W."/>
            <person name="Barabote R."/>
            <person name="Lorca G."/>
            <person name="Altermann E."/>
            <person name="Barrangou R."/>
            <person name="Ganesan B."/>
            <person name="Xie Y."/>
            <person name="Rawsthorne H."/>
            <person name="Tamir D."/>
            <person name="Parker C."/>
            <person name="Breidt F."/>
            <person name="Broadbent J.R."/>
            <person name="Hutkins R."/>
            <person name="O'Sullivan D."/>
            <person name="Steele J."/>
            <person name="Unlu G."/>
            <person name="Saier M.H. Jr."/>
            <person name="Klaenhammer T."/>
            <person name="Richardson P."/>
            <person name="Kozyavkin S."/>
            <person name="Weimer B.C."/>
            <person name="Mills D.A."/>
        </authorList>
    </citation>
    <scope>NUCLEOTIDE SEQUENCE [LARGE SCALE GENOMIC DNA]</scope>
    <source>
        <strain>SK11</strain>
    </source>
</reference>